<dbReference type="EMBL" id="BX284602">
    <property type="protein sequence ID" value="CCD65815.1"/>
    <property type="molecule type" value="Genomic_DNA"/>
</dbReference>
<dbReference type="RefSeq" id="NP_494963.1">
    <property type="nucleotide sequence ID" value="NM_062562.1"/>
</dbReference>
<dbReference type="FunCoup" id="Q95ZY2">
    <property type="interactions" value="2"/>
</dbReference>
<dbReference type="STRING" id="6239.C27D6.8.1"/>
<dbReference type="GlyCosmos" id="Q95ZY2">
    <property type="glycosylation" value="4 sites, No reported glycans"/>
</dbReference>
<dbReference type="PaxDb" id="6239-C27D6.8"/>
<dbReference type="EnsemblMetazoa" id="C27D6.8.1">
    <property type="protein sequence ID" value="C27D6.8.1"/>
    <property type="gene ID" value="WBGene00005068"/>
</dbReference>
<dbReference type="GeneID" id="191785"/>
<dbReference type="KEGG" id="cel:CELE_C27D6.8"/>
<dbReference type="UCSC" id="C27D6.8">
    <property type="organism name" value="c. elegans"/>
</dbReference>
<dbReference type="AGR" id="WB:WBGene00005068"/>
<dbReference type="CTD" id="191785"/>
<dbReference type="WormBase" id="C27D6.8">
    <property type="protein sequence ID" value="CE06888"/>
    <property type="gene ID" value="WBGene00005068"/>
    <property type="gene designation" value="srb-3"/>
</dbReference>
<dbReference type="eggNOG" id="ENOG502RT5J">
    <property type="taxonomic scope" value="Eukaryota"/>
</dbReference>
<dbReference type="GeneTree" id="ENSGT00970000195867"/>
<dbReference type="HOGENOM" id="CLU_045882_1_0_1"/>
<dbReference type="InParanoid" id="Q95ZY2"/>
<dbReference type="OMA" id="CILIKIH"/>
<dbReference type="OrthoDB" id="5844361at2759"/>
<dbReference type="PhylomeDB" id="Q95ZY2"/>
<dbReference type="PRO" id="PR:Q95ZY2"/>
<dbReference type="Proteomes" id="UP000001940">
    <property type="component" value="Chromosome II"/>
</dbReference>
<dbReference type="GO" id="GO:0030425">
    <property type="term" value="C:dendrite"/>
    <property type="evidence" value="ECO:0007669"/>
    <property type="project" value="UniProtKB-SubCell"/>
</dbReference>
<dbReference type="GO" id="GO:0043204">
    <property type="term" value="C:perikaryon"/>
    <property type="evidence" value="ECO:0007669"/>
    <property type="project" value="UniProtKB-SubCell"/>
</dbReference>
<dbReference type="GO" id="GO:0005886">
    <property type="term" value="C:plasma membrane"/>
    <property type="evidence" value="ECO:0007669"/>
    <property type="project" value="UniProtKB-SubCell"/>
</dbReference>
<dbReference type="GO" id="GO:0004930">
    <property type="term" value="F:G protein-coupled receptor activity"/>
    <property type="evidence" value="ECO:0007669"/>
    <property type="project" value="UniProtKB-KW"/>
</dbReference>
<dbReference type="GO" id="GO:0007606">
    <property type="term" value="P:sensory perception of chemical stimulus"/>
    <property type="evidence" value="ECO:0007669"/>
    <property type="project" value="InterPro"/>
</dbReference>
<dbReference type="InterPro" id="IPR002184">
    <property type="entry name" value="7TM_GPCR_serpentine_rcpt_Srb"/>
</dbReference>
<dbReference type="PANTHER" id="PTHR31216">
    <property type="entry name" value="SERPENTINE RECEPTOR CLASS BETA-1-RELATED-RELATED"/>
    <property type="match status" value="1"/>
</dbReference>
<dbReference type="PANTHER" id="PTHR31216:SF1">
    <property type="entry name" value="SERPENTINE RECEPTOR CLASS BETA-3"/>
    <property type="match status" value="1"/>
</dbReference>
<dbReference type="Pfam" id="PF02175">
    <property type="entry name" value="7TM_GPCR_Srb"/>
    <property type="match status" value="1"/>
</dbReference>
<dbReference type="PRINTS" id="PR00699">
    <property type="entry name" value="TMPROTEINSRB"/>
</dbReference>
<gene>
    <name evidence="5" type="primary">srb-3</name>
    <name evidence="5" type="ORF">C27D6.8</name>
</gene>
<evidence type="ECO:0000255" key="1"/>
<evidence type="ECO:0000255" key="2">
    <source>
        <dbReference type="PROSITE-ProRule" id="PRU00498"/>
    </source>
</evidence>
<evidence type="ECO:0000269" key="3">
    <source>
    </source>
</evidence>
<evidence type="ECO:0000305" key="4"/>
<evidence type="ECO:0000312" key="5">
    <source>
        <dbReference type="WormBase" id="C27D6.8"/>
    </source>
</evidence>
<comment type="function">
    <text evidence="4">G-protein coupled receptor.</text>
</comment>
<comment type="subcellular location">
    <subcellularLocation>
        <location evidence="4">Cell membrane</location>
        <topology evidence="4">Multi-pass membrane protein</topology>
    </subcellularLocation>
    <subcellularLocation>
        <location evidence="3">Perikaryon</location>
    </subcellularLocation>
    <subcellularLocation>
        <location evidence="3">Cell projection</location>
        <location evidence="3">Dendrite</location>
    </subcellularLocation>
</comment>
<comment type="tissue specificity">
    <text evidence="3">Expressed throughout the head.</text>
</comment>
<comment type="similarity">
    <text evidence="4">Belongs to the nematode receptor-like protein srb family.</text>
</comment>
<proteinExistence type="evidence at transcript level"/>
<reference key="1">
    <citation type="journal article" date="1998" name="Science">
        <title>Genome sequence of the nematode C. elegans: a platform for investigating biology.</title>
        <authorList>
            <consortium name="The C. elegans sequencing consortium"/>
        </authorList>
    </citation>
    <scope>NUCLEOTIDE SEQUENCE [LARGE SCALE GENOMIC DNA]</scope>
    <source>
        <strain>Bristol N2</strain>
    </source>
</reference>
<reference key="2">
    <citation type="journal article" date="2017" name="PLoS Biol.">
        <title>Chemosensory and hyperoxia circuits in C. elegans males influence sperm navigational capacity.</title>
        <authorList>
            <person name="Hoang H.D."/>
            <person name="Miller M.A."/>
        </authorList>
    </citation>
    <scope>SUBCELLULAR LOCATION</scope>
    <scope>TISSUE SPECIFICITY</scope>
</reference>
<accession>Q95ZY2</accession>
<name>SRB3_CAEEL</name>
<sequence>MLETNDSVCELAYQLAYHPVYRSSQFWSMLVSSLSIPALIYFITRKIFFLHFHGNLKCLLIVYFICNLLFSMALCFAFFYQFLIPFFVTSKCQLLINTTLFKWGQICSFLLLTSSMLLPIGFSIERFVALGNAQKYESSRTFLGPVIIFIIIAVDFSIIFSVYKNEPFTEGFYSFILVPSTTASQINMYFFVLLFVKIFNLLLNCILLRIHKKIRIKYYSLSVRYEMEEILQSSKFTFIIRFTHLLFFGFYVVVILFVRIMGESFFNGTLNYSVARGVFCTVPTYNLIIVIIGIKSLRHLNLQRLNKVQSTVQIKSTGKEGSKNYEDIITNYWDSVSSRTP</sequence>
<keyword id="KW-1003">Cell membrane</keyword>
<keyword id="KW-0966">Cell projection</keyword>
<keyword id="KW-0297">G-protein coupled receptor</keyword>
<keyword id="KW-0325">Glycoprotein</keyword>
<keyword id="KW-0472">Membrane</keyword>
<keyword id="KW-0675">Receptor</keyword>
<keyword id="KW-1185">Reference proteome</keyword>
<keyword id="KW-0807">Transducer</keyword>
<keyword id="KW-0812">Transmembrane</keyword>
<keyword id="KW-1133">Transmembrane helix</keyword>
<organism>
    <name type="scientific">Caenorhabditis elegans</name>
    <dbReference type="NCBI Taxonomy" id="6239"/>
    <lineage>
        <taxon>Eukaryota</taxon>
        <taxon>Metazoa</taxon>
        <taxon>Ecdysozoa</taxon>
        <taxon>Nematoda</taxon>
        <taxon>Chromadorea</taxon>
        <taxon>Rhabditida</taxon>
        <taxon>Rhabditina</taxon>
        <taxon>Rhabditomorpha</taxon>
        <taxon>Rhabditoidea</taxon>
        <taxon>Rhabditidae</taxon>
        <taxon>Peloderinae</taxon>
        <taxon>Caenorhabditis</taxon>
    </lineage>
</organism>
<protein>
    <recommendedName>
        <fullName>Serpentine receptor class beta-3</fullName>
        <shortName>Protein srb-3</shortName>
    </recommendedName>
</protein>
<feature type="chain" id="PRO_0000104498" description="Serpentine receptor class beta-3">
    <location>
        <begin position="1"/>
        <end position="341"/>
    </location>
</feature>
<feature type="topological domain" description="Extracellular" evidence="4">
    <location>
        <begin position="1"/>
        <end position="23"/>
    </location>
</feature>
<feature type="transmembrane region" description="Helical; Name=1" evidence="1">
    <location>
        <begin position="24"/>
        <end position="44"/>
    </location>
</feature>
<feature type="topological domain" description="Cytoplasmic" evidence="4">
    <location>
        <begin position="45"/>
        <end position="58"/>
    </location>
</feature>
<feature type="transmembrane region" description="Helical; Name=2" evidence="1">
    <location>
        <begin position="59"/>
        <end position="79"/>
    </location>
</feature>
<feature type="topological domain" description="Extracellular" evidence="4">
    <location>
        <begin position="80"/>
        <end position="103"/>
    </location>
</feature>
<feature type="transmembrane region" description="Helical; Name=3" evidence="1">
    <location>
        <begin position="104"/>
        <end position="124"/>
    </location>
</feature>
<feature type="topological domain" description="Cytoplasmic" evidence="4">
    <location>
        <begin position="125"/>
        <end position="141"/>
    </location>
</feature>
<feature type="transmembrane region" description="Helical; Name=4" evidence="1">
    <location>
        <begin position="142"/>
        <end position="162"/>
    </location>
</feature>
<feature type="topological domain" description="Extracellular" evidence="4">
    <location>
        <begin position="163"/>
        <end position="187"/>
    </location>
</feature>
<feature type="transmembrane region" description="Helical; Name=5" evidence="1">
    <location>
        <begin position="188"/>
        <end position="208"/>
    </location>
</feature>
<feature type="topological domain" description="Cytoplasmic" evidence="4">
    <location>
        <begin position="209"/>
        <end position="237"/>
    </location>
</feature>
<feature type="transmembrane region" description="Helical; Name=6" evidence="1">
    <location>
        <begin position="238"/>
        <end position="258"/>
    </location>
</feature>
<feature type="topological domain" description="Extracellular" evidence="4">
    <location>
        <begin position="259"/>
        <end position="276"/>
    </location>
</feature>
<feature type="transmembrane region" description="Helical; Name=7" evidence="1">
    <location>
        <begin position="277"/>
        <end position="297"/>
    </location>
</feature>
<feature type="topological domain" description="Cytoplasmic" evidence="4">
    <location>
        <begin position="298"/>
        <end position="341"/>
    </location>
</feature>
<feature type="glycosylation site" description="N-linked (GlcNAc...) asparagine" evidence="2">
    <location>
        <position position="5"/>
    </location>
</feature>
<feature type="glycosylation site" description="N-linked (GlcNAc...) asparagine" evidence="2">
    <location>
        <position position="97"/>
    </location>
</feature>
<feature type="glycosylation site" description="N-linked (GlcNAc...) asparagine" evidence="2">
    <location>
        <position position="267"/>
    </location>
</feature>
<feature type="glycosylation site" description="N-linked (GlcNAc...) asparagine" evidence="2">
    <location>
        <position position="271"/>
    </location>
</feature>